<comment type="similarity">
    <text evidence="1">Belongs to the UPF0736 family.</text>
</comment>
<organism>
    <name type="scientific">Bacillus anthracis (strain A0248)</name>
    <dbReference type="NCBI Taxonomy" id="592021"/>
    <lineage>
        <taxon>Bacteria</taxon>
        <taxon>Bacillati</taxon>
        <taxon>Bacillota</taxon>
        <taxon>Bacilli</taxon>
        <taxon>Bacillales</taxon>
        <taxon>Bacillaceae</taxon>
        <taxon>Bacillus</taxon>
        <taxon>Bacillus cereus group</taxon>
    </lineage>
</organism>
<feature type="chain" id="PRO_1000188702" description="UPF0736 protein BAA_1264">
    <location>
        <begin position="1"/>
        <end position="248"/>
    </location>
</feature>
<name>Y1264_BACAA</name>
<protein>
    <recommendedName>
        <fullName evidence="1">UPF0736 protein BAA_1264</fullName>
    </recommendedName>
</protein>
<accession>C3P3M8</accession>
<dbReference type="EMBL" id="CP001598">
    <property type="protein sequence ID" value="ACQ48652.1"/>
    <property type="molecule type" value="Genomic_DNA"/>
</dbReference>
<dbReference type="RefSeq" id="WP_000966134.1">
    <property type="nucleotide sequence ID" value="NC_012659.1"/>
</dbReference>
<dbReference type="SMR" id="C3P3M8"/>
<dbReference type="GeneID" id="45021195"/>
<dbReference type="KEGG" id="bai:BAA_1264"/>
<dbReference type="HOGENOM" id="CLU_1101152_0_0_9"/>
<dbReference type="HAMAP" id="MF_01860">
    <property type="entry name" value="UPF0736"/>
    <property type="match status" value="1"/>
</dbReference>
<dbReference type="InterPro" id="IPR020909">
    <property type="entry name" value="UPF0736"/>
</dbReference>
<dbReference type="Pfam" id="PF12227">
    <property type="entry name" value="DUF3603"/>
    <property type="match status" value="1"/>
</dbReference>
<proteinExistence type="inferred from homology"/>
<gene>
    <name type="ordered locus">BAA_1264</name>
</gene>
<reference key="1">
    <citation type="submission" date="2009-04" db="EMBL/GenBank/DDBJ databases">
        <title>Genome sequence of Bacillus anthracis A0248.</title>
        <authorList>
            <person name="Dodson R.J."/>
            <person name="Munk A.C."/>
            <person name="Bruce D."/>
            <person name="Detter C."/>
            <person name="Tapia R."/>
            <person name="Sutton G."/>
            <person name="Sims D."/>
            <person name="Brettin T."/>
        </authorList>
    </citation>
    <scope>NUCLEOTIDE SEQUENCE [LARGE SCALE GENOMIC DNA]</scope>
    <source>
        <strain>A0248</strain>
    </source>
</reference>
<evidence type="ECO:0000255" key="1">
    <source>
        <dbReference type="HAMAP-Rule" id="MF_01860"/>
    </source>
</evidence>
<sequence length="248" mass="30052">MLYLHDVWVNWFEGEENGYNVCHFYEWRKDDTIELLDQVPLLKVDSTLYHYIENELLELPQKLLEDVHHKAYIRKNHERLQQEYCFVVTDGKGIIAIDTIGYNVPIRKSRLIPRQEQMVYEMVENVQAEKYEFQVEEMEKEHHILSPSPFVMNGLTRKERQLKQLLFMALDQLHTTKNTAEIRYWFTEWDPSAYGMVQHMEFEDIWAKLYDEAKTGWSEKHEQLCERLVKGQPFFEKLWEMENEQKVN</sequence>